<feature type="chain" id="PRO_0000062748" description="Cell division protein FtsA">
    <location>
        <begin position="1"/>
        <end position="470"/>
    </location>
</feature>
<feature type="region of interest" description="Disordered" evidence="2">
    <location>
        <begin position="416"/>
        <end position="470"/>
    </location>
</feature>
<feature type="compositionally biased region" description="Acidic residues" evidence="2">
    <location>
        <begin position="425"/>
        <end position="434"/>
    </location>
</feature>
<feature type="compositionally biased region" description="Basic and acidic residues" evidence="2">
    <location>
        <begin position="436"/>
        <end position="461"/>
    </location>
</feature>
<accession>P63765</accession>
<accession>Q99US9</accession>
<gene>
    <name evidence="1" type="primary">ftsA</name>
    <name type="ordered locus">SA1028</name>
</gene>
<protein>
    <recommendedName>
        <fullName evidence="1">Cell division protein FtsA</fullName>
    </recommendedName>
</protein>
<organism>
    <name type="scientific">Staphylococcus aureus (strain N315)</name>
    <dbReference type="NCBI Taxonomy" id="158879"/>
    <lineage>
        <taxon>Bacteria</taxon>
        <taxon>Bacillati</taxon>
        <taxon>Bacillota</taxon>
        <taxon>Bacilli</taxon>
        <taxon>Bacillales</taxon>
        <taxon>Staphylococcaceae</taxon>
        <taxon>Staphylococcus</taxon>
    </lineage>
</organism>
<name>FTSA_STAAN</name>
<sequence length="470" mass="52935">MEEHYYVSIDIGSSSVKTIVGEKFHNGINVIGTGQTYTSGIKNGLIDDFDIARQAIKDTIKKASIASGVDIKEVFLKLPIIGTEVYDESNEIDFYEDTEINGSHIEKVLEGIREKNDVQETEVINVFPIRFIVDKENEVSDPKELIARHSLKVEAGVIAIQKSILINMIKCVEACGVDVLDVYSDAYNYGSILTATEKELGACVIDIGEDVTQVAFYERGELVDADSIEMAGRDITDDIAQGLNTSYETAEKVKHQYGHAFYDSASDQDIFTVEQVDSDETVQYTQKDLSDFIEARVEEIFFEVFDVLQDLGLTKVNGGFIVTGGSANLLGVKELLSDMVSEKVRIHTPSQMGIRKPEFSSAISTISSSIAFDELLDYVTINYHDNEETEEDVIDVKDKDNESKLGGFDWFKRKTNKKDTHENEVESTDEEIYQSEDNHQEHKQNHEHVQDKDKDKEESKFKKLMKSLFE</sequence>
<keyword id="KW-0131">Cell cycle</keyword>
<keyword id="KW-0132">Cell division</keyword>
<keyword id="KW-1003">Cell membrane</keyword>
<keyword id="KW-0472">Membrane</keyword>
<comment type="function">
    <text evidence="1">Cell division protein that is involved in the assembly of the Z ring. May serve as a membrane anchor for the Z ring.</text>
</comment>
<comment type="subunit">
    <text evidence="1">Self-interacts. Interacts with FtsZ.</text>
</comment>
<comment type="subcellular location">
    <subcellularLocation>
        <location evidence="1">Cell membrane</location>
        <topology evidence="1">Peripheral membrane protein</topology>
        <orientation evidence="1">Cytoplasmic side</orientation>
    </subcellularLocation>
    <text evidence="1">Localizes to the Z ring in an FtsZ-dependent manner. Targeted to the membrane through a conserved C-terminal amphipathic helix.</text>
</comment>
<comment type="similarity">
    <text evidence="1">Belongs to the FtsA/MreB family.</text>
</comment>
<dbReference type="EMBL" id="BA000018">
    <property type="protein sequence ID" value="BAB42280.1"/>
    <property type="molecule type" value="Genomic_DNA"/>
</dbReference>
<dbReference type="PIR" id="D89890">
    <property type="entry name" value="D89890"/>
</dbReference>
<dbReference type="RefSeq" id="WP_000391031.1">
    <property type="nucleotide sequence ID" value="NC_002745.2"/>
</dbReference>
<dbReference type="SMR" id="P63765"/>
<dbReference type="EnsemblBacteria" id="BAB42280">
    <property type="protein sequence ID" value="BAB42280"/>
    <property type="gene ID" value="BAB42280"/>
</dbReference>
<dbReference type="KEGG" id="sau:SA1028"/>
<dbReference type="HOGENOM" id="CLU_037850_1_0_9"/>
<dbReference type="GO" id="GO:0032153">
    <property type="term" value="C:cell division site"/>
    <property type="evidence" value="ECO:0007669"/>
    <property type="project" value="UniProtKB-UniRule"/>
</dbReference>
<dbReference type="GO" id="GO:0009898">
    <property type="term" value="C:cytoplasmic side of plasma membrane"/>
    <property type="evidence" value="ECO:0007669"/>
    <property type="project" value="UniProtKB-UniRule"/>
</dbReference>
<dbReference type="GO" id="GO:0043093">
    <property type="term" value="P:FtsZ-dependent cytokinesis"/>
    <property type="evidence" value="ECO:0007669"/>
    <property type="project" value="UniProtKB-UniRule"/>
</dbReference>
<dbReference type="CDD" id="cd24048">
    <property type="entry name" value="ASKHA_NBD_FtsA"/>
    <property type="match status" value="1"/>
</dbReference>
<dbReference type="FunFam" id="3.30.420.40:FF:000196">
    <property type="entry name" value="Cell division protein FtsA"/>
    <property type="match status" value="1"/>
</dbReference>
<dbReference type="Gene3D" id="3.30.1490.110">
    <property type="match status" value="1"/>
</dbReference>
<dbReference type="Gene3D" id="3.30.420.40">
    <property type="match status" value="2"/>
</dbReference>
<dbReference type="HAMAP" id="MF_02033">
    <property type="entry name" value="FtsA"/>
    <property type="match status" value="1"/>
</dbReference>
<dbReference type="InterPro" id="IPR043129">
    <property type="entry name" value="ATPase_NBD"/>
</dbReference>
<dbReference type="InterPro" id="IPR020823">
    <property type="entry name" value="Cell_div_FtsA"/>
</dbReference>
<dbReference type="InterPro" id="IPR050696">
    <property type="entry name" value="FtsA/MreB"/>
</dbReference>
<dbReference type="InterPro" id="IPR003494">
    <property type="entry name" value="SHS2_FtsA"/>
</dbReference>
<dbReference type="NCBIfam" id="TIGR01174">
    <property type="entry name" value="ftsA"/>
    <property type="match status" value="1"/>
</dbReference>
<dbReference type="PANTHER" id="PTHR32432:SF4">
    <property type="entry name" value="CELL DIVISION PROTEIN FTSA"/>
    <property type="match status" value="1"/>
</dbReference>
<dbReference type="PANTHER" id="PTHR32432">
    <property type="entry name" value="CELL DIVISION PROTEIN FTSA-RELATED"/>
    <property type="match status" value="1"/>
</dbReference>
<dbReference type="Pfam" id="PF14450">
    <property type="entry name" value="FtsA"/>
    <property type="match status" value="1"/>
</dbReference>
<dbReference type="Pfam" id="PF02491">
    <property type="entry name" value="SHS2_FTSA"/>
    <property type="match status" value="1"/>
</dbReference>
<dbReference type="PIRSF" id="PIRSF003101">
    <property type="entry name" value="FtsA"/>
    <property type="match status" value="1"/>
</dbReference>
<dbReference type="SMART" id="SM00842">
    <property type="entry name" value="FtsA"/>
    <property type="match status" value="1"/>
</dbReference>
<dbReference type="SUPFAM" id="SSF53067">
    <property type="entry name" value="Actin-like ATPase domain"/>
    <property type="match status" value="2"/>
</dbReference>
<evidence type="ECO:0000255" key="1">
    <source>
        <dbReference type="HAMAP-Rule" id="MF_02033"/>
    </source>
</evidence>
<evidence type="ECO:0000256" key="2">
    <source>
        <dbReference type="SAM" id="MobiDB-lite"/>
    </source>
</evidence>
<reference key="1">
    <citation type="journal article" date="2001" name="Lancet">
        <title>Whole genome sequencing of meticillin-resistant Staphylococcus aureus.</title>
        <authorList>
            <person name="Kuroda M."/>
            <person name="Ohta T."/>
            <person name="Uchiyama I."/>
            <person name="Baba T."/>
            <person name="Yuzawa H."/>
            <person name="Kobayashi I."/>
            <person name="Cui L."/>
            <person name="Oguchi A."/>
            <person name="Aoki K."/>
            <person name="Nagai Y."/>
            <person name="Lian J.-Q."/>
            <person name="Ito T."/>
            <person name="Kanamori M."/>
            <person name="Matsumaru H."/>
            <person name="Maruyama A."/>
            <person name="Murakami H."/>
            <person name="Hosoyama A."/>
            <person name="Mizutani-Ui Y."/>
            <person name="Takahashi N.K."/>
            <person name="Sawano T."/>
            <person name="Inoue R."/>
            <person name="Kaito C."/>
            <person name="Sekimizu K."/>
            <person name="Hirakawa H."/>
            <person name="Kuhara S."/>
            <person name="Goto S."/>
            <person name="Yabuzaki J."/>
            <person name="Kanehisa M."/>
            <person name="Yamashita A."/>
            <person name="Oshima K."/>
            <person name="Furuya K."/>
            <person name="Yoshino C."/>
            <person name="Shiba T."/>
            <person name="Hattori M."/>
            <person name="Ogasawara N."/>
            <person name="Hayashi H."/>
            <person name="Hiramatsu K."/>
        </authorList>
    </citation>
    <scope>NUCLEOTIDE SEQUENCE [LARGE SCALE GENOMIC DNA]</scope>
    <source>
        <strain>N315</strain>
    </source>
</reference>
<reference key="2">
    <citation type="submission" date="2007-10" db="UniProtKB">
        <title>Shotgun proteomic analysis of total and membrane protein extracts of S. aureus strain N315.</title>
        <authorList>
            <person name="Vaezzadeh A.R."/>
            <person name="Deshusses J."/>
            <person name="Lescuyer P."/>
            <person name="Hochstrasser D.F."/>
        </authorList>
    </citation>
    <scope>IDENTIFICATION BY MASS SPECTROMETRY [LARGE SCALE ANALYSIS]</scope>
    <source>
        <strain>N315</strain>
    </source>
</reference>
<proteinExistence type="evidence at protein level"/>